<sequence>MLPAATASLLGPLLTACALLPFAQGQTPNYTRPVFLCGGDVKGESGYVASEGFPNLYPPNKECIWTITVPEGQTVSLSFRVFDLELHPACRYDALEVFAGSGTSGQRLGRFCGTFRPAPLVAPGNQVTLRMTTDEGTGGRGFLLWYSGRATSGTEHQFCGGRLEKAQGTLTTPNWPESDYPPGISCSWHIIAPPDQVIALTFEKFDLEPDTYCRYDSVSVFNGAVSDDSRRLGKFCGDAVPGSISSEGNELLVQFVSDLSVTADGFSASYKTLPRGTAKEGQGPGPKRGTEPKVKLPPKSQPPEKTEESPSAPDAPTCPKQCRRTGTLQSNFCASSLVVTATVKSMVREPGEGLAVTVSLIGAYKTGGLDLPSPPTGASLKFYVPCKQCPPMKKGVSYLLMGQVEENRGPVLPPESFVVLHRPNQDQILTNLSKRKCPSQPVRAAASQD</sequence>
<dbReference type="EMBL" id="L33799">
    <property type="protein sequence ID" value="AAA61949.1"/>
    <property type="status" value="ALT_SEQ"/>
    <property type="molecule type" value="mRNA"/>
</dbReference>
<dbReference type="EMBL" id="AB008549">
    <property type="protein sequence ID" value="BAA23281.1"/>
    <property type="molecule type" value="mRNA"/>
</dbReference>
<dbReference type="EMBL" id="AF053356">
    <property type="protein sequence ID" value="AAC78800.1"/>
    <property type="molecule type" value="Genomic_DNA"/>
</dbReference>
<dbReference type="EMBL" id="AF083655">
    <property type="protein sequence ID" value="AAD16041.1"/>
    <property type="molecule type" value="Genomic_DNA"/>
</dbReference>
<dbReference type="EMBL" id="AK313748">
    <property type="protein sequence ID" value="BAG36488.1"/>
    <property type="molecule type" value="mRNA"/>
</dbReference>
<dbReference type="EMBL" id="CH471091">
    <property type="protein sequence ID" value="EAW76515.1"/>
    <property type="molecule type" value="Genomic_DNA"/>
</dbReference>
<dbReference type="EMBL" id="BC000574">
    <property type="protein sequence ID" value="AAH00574.1"/>
    <property type="molecule type" value="mRNA"/>
</dbReference>
<dbReference type="EMBL" id="BC033205">
    <property type="protein sequence ID" value="AAH33205.1"/>
    <property type="molecule type" value="mRNA"/>
</dbReference>
<dbReference type="CCDS" id="CCDS5700.1"/>
<dbReference type="PIR" id="A55362">
    <property type="entry name" value="A55362"/>
</dbReference>
<dbReference type="RefSeq" id="NP_002584.2">
    <property type="nucleotide sequence ID" value="NM_002593.4"/>
</dbReference>
<dbReference type="PDB" id="1UAP">
    <property type="method" value="NMR"/>
    <property type="chains" value="A=313-442"/>
</dbReference>
<dbReference type="PDB" id="6FZV">
    <property type="method" value="X-ray"/>
    <property type="resolution" value="2.70 A"/>
    <property type="chains" value="D=26-278"/>
</dbReference>
<dbReference type="PDB" id="6FZW">
    <property type="method" value="X-ray"/>
    <property type="resolution" value="2.78 A"/>
    <property type="chains" value="D=26-278"/>
</dbReference>
<dbReference type="PDB" id="9EN2">
    <property type="method" value="X-ray"/>
    <property type="resolution" value="2.20 A"/>
    <property type="chains" value="A=25-277"/>
</dbReference>
<dbReference type="PDBsum" id="1UAP"/>
<dbReference type="PDBsum" id="6FZV"/>
<dbReference type="PDBsum" id="6FZW"/>
<dbReference type="PDBsum" id="9EN2"/>
<dbReference type="BMRB" id="Q15113"/>
<dbReference type="SASBDB" id="Q15113"/>
<dbReference type="SMR" id="Q15113"/>
<dbReference type="BioGRID" id="111147">
    <property type="interactions" value="6"/>
</dbReference>
<dbReference type="FunCoup" id="Q15113">
    <property type="interactions" value="159"/>
</dbReference>
<dbReference type="IntAct" id="Q15113">
    <property type="interactions" value="25"/>
</dbReference>
<dbReference type="MINT" id="Q15113"/>
<dbReference type="STRING" id="9606.ENSP00000223061"/>
<dbReference type="GlyCosmos" id="Q15113">
    <property type="glycosylation" value="4 sites, 1 glycan"/>
</dbReference>
<dbReference type="GlyGen" id="Q15113">
    <property type="glycosylation" value="5 sites, 2 O-linked glycans (3 sites)"/>
</dbReference>
<dbReference type="iPTMnet" id="Q15113"/>
<dbReference type="PhosphoSitePlus" id="Q15113"/>
<dbReference type="BioMuta" id="PCOLCE"/>
<dbReference type="DMDM" id="6919941"/>
<dbReference type="jPOST" id="Q15113"/>
<dbReference type="MassIVE" id="Q15113"/>
<dbReference type="PaxDb" id="9606-ENSP00000223061"/>
<dbReference type="PeptideAtlas" id="Q15113"/>
<dbReference type="ProteomicsDB" id="60442"/>
<dbReference type="Antibodypedia" id="4318">
    <property type="antibodies" value="271 antibodies from 32 providers"/>
</dbReference>
<dbReference type="DNASU" id="5118"/>
<dbReference type="Ensembl" id="ENST00000223061.6">
    <property type="protein sequence ID" value="ENSP00000223061.5"/>
    <property type="gene ID" value="ENSG00000106333.13"/>
</dbReference>
<dbReference type="GeneID" id="5118"/>
<dbReference type="KEGG" id="hsa:5118"/>
<dbReference type="MANE-Select" id="ENST00000223061.6">
    <property type="protein sequence ID" value="ENSP00000223061.5"/>
    <property type="RefSeq nucleotide sequence ID" value="NM_002593.4"/>
    <property type="RefSeq protein sequence ID" value="NP_002584.2"/>
</dbReference>
<dbReference type="UCSC" id="uc003uvo.5">
    <property type="organism name" value="human"/>
</dbReference>
<dbReference type="AGR" id="HGNC:8738"/>
<dbReference type="CTD" id="5118"/>
<dbReference type="DisGeNET" id="5118"/>
<dbReference type="GeneCards" id="PCOLCE"/>
<dbReference type="HGNC" id="HGNC:8738">
    <property type="gene designation" value="PCOLCE"/>
</dbReference>
<dbReference type="HPA" id="ENSG00000106333">
    <property type="expression patterns" value="Low tissue specificity"/>
</dbReference>
<dbReference type="MIM" id="600270">
    <property type="type" value="gene"/>
</dbReference>
<dbReference type="neXtProt" id="NX_Q15113"/>
<dbReference type="OpenTargets" id="ENSG00000106333"/>
<dbReference type="PharmGKB" id="PA33083"/>
<dbReference type="VEuPathDB" id="HostDB:ENSG00000106333"/>
<dbReference type="eggNOG" id="ENOG502QTZ9">
    <property type="taxonomic scope" value="Eukaryota"/>
</dbReference>
<dbReference type="GeneTree" id="ENSGT00940000159264"/>
<dbReference type="HOGENOM" id="CLU_034096_0_0_1"/>
<dbReference type="InParanoid" id="Q15113"/>
<dbReference type="OMA" id="WTEAQSQ"/>
<dbReference type="OrthoDB" id="6116165at2759"/>
<dbReference type="PAN-GO" id="Q15113">
    <property type="GO annotations" value="3 GO annotations based on evolutionary models"/>
</dbReference>
<dbReference type="PhylomeDB" id="Q15113"/>
<dbReference type="TreeFam" id="TF316506"/>
<dbReference type="PathwayCommons" id="Q15113"/>
<dbReference type="Reactome" id="R-HSA-1650814">
    <property type="pathway name" value="Collagen biosynthesis and modifying enzymes"/>
</dbReference>
<dbReference type="Reactome" id="R-HSA-2243919">
    <property type="pathway name" value="Crosslinking of collagen fibrils"/>
</dbReference>
<dbReference type="SignaLink" id="Q15113"/>
<dbReference type="BioGRID-ORCS" id="5118">
    <property type="hits" value="10 hits in 1150 CRISPR screens"/>
</dbReference>
<dbReference type="ChiTaRS" id="PCOLCE">
    <property type="organism name" value="human"/>
</dbReference>
<dbReference type="EvolutionaryTrace" id="Q15113"/>
<dbReference type="GeneWiki" id="PCOLCE"/>
<dbReference type="GenomeRNAi" id="5118"/>
<dbReference type="Pharos" id="Q15113">
    <property type="development level" value="Tbio"/>
</dbReference>
<dbReference type="PRO" id="PR:Q15113"/>
<dbReference type="Proteomes" id="UP000005640">
    <property type="component" value="Chromosome 7"/>
</dbReference>
<dbReference type="RNAct" id="Q15113">
    <property type="molecule type" value="protein"/>
</dbReference>
<dbReference type="Bgee" id="ENSG00000106333">
    <property type="expression patterns" value="Expressed in stromal cell of endometrium and 148 other cell types or tissues"/>
</dbReference>
<dbReference type="GO" id="GO:0070062">
    <property type="term" value="C:extracellular exosome"/>
    <property type="evidence" value="ECO:0007005"/>
    <property type="project" value="UniProtKB"/>
</dbReference>
<dbReference type="GO" id="GO:0005576">
    <property type="term" value="C:extracellular region"/>
    <property type="evidence" value="ECO:0007005"/>
    <property type="project" value="BHF-UCL"/>
</dbReference>
<dbReference type="GO" id="GO:0005615">
    <property type="term" value="C:extracellular space"/>
    <property type="evidence" value="ECO:0007005"/>
    <property type="project" value="BHF-UCL"/>
</dbReference>
<dbReference type="GO" id="GO:0005518">
    <property type="term" value="F:collagen binding"/>
    <property type="evidence" value="ECO:0000314"/>
    <property type="project" value="MGI"/>
</dbReference>
<dbReference type="GO" id="GO:0008201">
    <property type="term" value="F:heparin binding"/>
    <property type="evidence" value="ECO:0000314"/>
    <property type="project" value="MGI"/>
</dbReference>
<dbReference type="GO" id="GO:0016504">
    <property type="term" value="F:peptidase activator activity"/>
    <property type="evidence" value="ECO:0000314"/>
    <property type="project" value="MGI"/>
</dbReference>
<dbReference type="GO" id="GO:0032964">
    <property type="term" value="P:collagen biosynthetic process"/>
    <property type="evidence" value="ECO:0000304"/>
    <property type="project" value="ProtInc"/>
</dbReference>
<dbReference type="GO" id="GO:0006508">
    <property type="term" value="P:proteolysis"/>
    <property type="evidence" value="ECO:0000318"/>
    <property type="project" value="GO_Central"/>
</dbReference>
<dbReference type="CDD" id="cd00041">
    <property type="entry name" value="CUB"/>
    <property type="match status" value="2"/>
</dbReference>
<dbReference type="CDD" id="cd03576">
    <property type="entry name" value="NTR_PCOLCE"/>
    <property type="match status" value="1"/>
</dbReference>
<dbReference type="DisProt" id="DP02622"/>
<dbReference type="FunFam" id="2.40.50.120:FF:000019">
    <property type="entry name" value="Procollagen C-endopeptidase enhancer 1"/>
    <property type="match status" value="1"/>
</dbReference>
<dbReference type="FunFam" id="2.60.120.290:FF:000005">
    <property type="entry name" value="Procollagen C-endopeptidase enhancer 1"/>
    <property type="match status" value="1"/>
</dbReference>
<dbReference type="FunFam" id="2.60.120.290:FF:000026">
    <property type="entry name" value="Procollagen C-endopeptidase enhancer 2"/>
    <property type="match status" value="1"/>
</dbReference>
<dbReference type="Gene3D" id="2.40.50.120">
    <property type="match status" value="1"/>
</dbReference>
<dbReference type="Gene3D" id="2.60.120.290">
    <property type="entry name" value="Spermadhesin, CUB domain"/>
    <property type="match status" value="2"/>
</dbReference>
<dbReference type="InterPro" id="IPR000859">
    <property type="entry name" value="CUB_dom"/>
</dbReference>
<dbReference type="InterPro" id="IPR001134">
    <property type="entry name" value="Netrin_domain"/>
</dbReference>
<dbReference type="InterPro" id="IPR018933">
    <property type="entry name" value="Netrin_module_non-TIMP"/>
</dbReference>
<dbReference type="InterPro" id="IPR035814">
    <property type="entry name" value="NTR_PCOLCE"/>
</dbReference>
<dbReference type="InterPro" id="IPR035914">
    <property type="entry name" value="Sperma_CUB_dom_sf"/>
</dbReference>
<dbReference type="InterPro" id="IPR008993">
    <property type="entry name" value="TIMP-like_OB-fold"/>
</dbReference>
<dbReference type="PANTHER" id="PTHR24251">
    <property type="entry name" value="OVOCHYMASE-RELATED"/>
    <property type="match status" value="1"/>
</dbReference>
<dbReference type="PANTHER" id="PTHR24251:SF24">
    <property type="entry name" value="PROCOLLAGEN C-ENDOPEPTIDASE ENHANCER 1"/>
    <property type="match status" value="1"/>
</dbReference>
<dbReference type="Pfam" id="PF00431">
    <property type="entry name" value="CUB"/>
    <property type="match status" value="2"/>
</dbReference>
<dbReference type="Pfam" id="PF01759">
    <property type="entry name" value="NTR"/>
    <property type="match status" value="1"/>
</dbReference>
<dbReference type="SMART" id="SM00643">
    <property type="entry name" value="C345C"/>
    <property type="match status" value="1"/>
</dbReference>
<dbReference type="SMART" id="SM00042">
    <property type="entry name" value="CUB"/>
    <property type="match status" value="2"/>
</dbReference>
<dbReference type="SUPFAM" id="SSF49854">
    <property type="entry name" value="Spermadhesin, CUB domain"/>
    <property type="match status" value="2"/>
</dbReference>
<dbReference type="SUPFAM" id="SSF50242">
    <property type="entry name" value="TIMP-like"/>
    <property type="match status" value="1"/>
</dbReference>
<dbReference type="PROSITE" id="PS01180">
    <property type="entry name" value="CUB"/>
    <property type="match status" value="2"/>
</dbReference>
<dbReference type="PROSITE" id="PS50189">
    <property type="entry name" value="NTR"/>
    <property type="match status" value="1"/>
</dbReference>
<name>PCOC1_HUMAN</name>
<feature type="signal peptide" evidence="3">
    <location>
        <begin position="1"/>
        <end position="25"/>
    </location>
</feature>
<feature type="chain" id="PRO_0000022023" description="Procollagen C-endopeptidase enhancer 1">
    <location>
        <begin position="26"/>
        <end position="449"/>
    </location>
</feature>
<feature type="domain" description="CUB 1" evidence="4">
    <location>
        <begin position="37"/>
        <end position="149"/>
    </location>
</feature>
<feature type="domain" description="CUB 2" evidence="4">
    <location>
        <begin position="159"/>
        <end position="273"/>
    </location>
</feature>
<feature type="domain" description="NTR" evidence="5">
    <location>
        <begin position="318"/>
        <end position="437"/>
    </location>
</feature>
<feature type="region of interest" description="Disordered" evidence="6">
    <location>
        <begin position="271"/>
        <end position="321"/>
    </location>
</feature>
<feature type="site" description="Cleavage" evidence="7">
    <location>
        <begin position="287"/>
        <end position="288"/>
    </location>
</feature>
<feature type="site" description="Cleavage" evidence="7">
    <location>
        <begin position="288"/>
        <end position="289"/>
    </location>
</feature>
<feature type="site" description="Cleavage" evidence="7">
    <location>
        <begin position="293"/>
        <end position="294"/>
    </location>
</feature>
<feature type="site" description="Cleavage" evidence="7">
    <location>
        <begin position="299"/>
        <end position="300"/>
    </location>
</feature>
<feature type="site" description="Cleavage" evidence="7">
    <location>
        <begin position="303"/>
        <end position="304"/>
    </location>
</feature>
<feature type="modified residue" description="Phosphoserine" evidence="1">
    <location>
        <position position="50"/>
    </location>
</feature>
<feature type="glycosylation site" description="N-linked (GlcNAc...) asparagine" evidence="3">
    <location>
        <position position="29"/>
    </location>
</feature>
<feature type="glycosylation site" description="N-linked (GlcNAc...) asparagine" evidence="3">
    <location>
        <position position="431"/>
    </location>
</feature>
<feature type="disulfide bond" evidence="4">
    <location>
        <begin position="37"/>
        <end position="63"/>
    </location>
</feature>
<feature type="disulfide bond" evidence="4">
    <location>
        <begin position="90"/>
        <end position="112"/>
    </location>
</feature>
<feature type="disulfide bond" evidence="4">
    <location>
        <begin position="159"/>
        <end position="186"/>
    </location>
</feature>
<feature type="disulfide bond" evidence="4">
    <location>
        <begin position="213"/>
        <end position="236"/>
    </location>
</feature>
<feature type="disulfide bond" evidence="8">
    <location>
        <begin position="318"/>
        <end position="386"/>
    </location>
</feature>
<feature type="disulfide bond" evidence="8">
    <location>
        <begin position="322"/>
        <end position="389"/>
    </location>
</feature>
<feature type="disulfide bond" evidence="8">
    <location>
        <begin position="333"/>
        <end position="437"/>
    </location>
</feature>
<feature type="strand" evidence="11">
    <location>
        <begin position="37"/>
        <end position="49"/>
    </location>
</feature>
<feature type="turn" evidence="11">
    <location>
        <begin position="51"/>
        <end position="54"/>
    </location>
</feature>
<feature type="strand" evidence="11">
    <location>
        <begin position="59"/>
        <end position="68"/>
    </location>
</feature>
<feature type="strand" evidence="11">
    <location>
        <begin position="73"/>
        <end position="84"/>
    </location>
</feature>
<feature type="strand" evidence="11">
    <location>
        <begin position="92"/>
        <end position="105"/>
    </location>
</feature>
<feature type="strand" evidence="11">
    <location>
        <begin position="107"/>
        <end position="111"/>
    </location>
</feature>
<feature type="strand" evidence="11">
    <location>
        <begin position="113"/>
        <end position="115"/>
    </location>
</feature>
<feature type="strand" evidence="11">
    <location>
        <begin position="123"/>
        <end position="133"/>
    </location>
</feature>
<feature type="strand" evidence="11">
    <location>
        <begin position="140"/>
        <end position="150"/>
    </location>
</feature>
<feature type="strand" evidence="11">
    <location>
        <begin position="161"/>
        <end position="163"/>
    </location>
</feature>
<feature type="strand" evidence="11">
    <location>
        <begin position="165"/>
        <end position="171"/>
    </location>
</feature>
<feature type="turn" evidence="11">
    <location>
        <begin position="173"/>
        <end position="177"/>
    </location>
</feature>
<feature type="strand" evidence="11">
    <location>
        <begin position="182"/>
        <end position="191"/>
    </location>
</feature>
<feature type="strand" evidence="11">
    <location>
        <begin position="197"/>
        <end position="206"/>
    </location>
</feature>
<feature type="strand" evidence="11">
    <location>
        <begin position="215"/>
        <end position="225"/>
    </location>
</feature>
<feature type="helix" evidence="11">
    <location>
        <begin position="228"/>
        <end position="230"/>
    </location>
</feature>
<feature type="strand" evidence="11">
    <location>
        <begin position="231"/>
        <end position="235"/>
    </location>
</feature>
<feature type="strand" evidence="10">
    <location>
        <begin position="237"/>
        <end position="239"/>
    </location>
</feature>
<feature type="strand" evidence="11">
    <location>
        <begin position="247"/>
        <end position="257"/>
    </location>
</feature>
<feature type="strand" evidence="11">
    <location>
        <begin position="265"/>
        <end position="274"/>
    </location>
</feature>
<feature type="helix" evidence="9">
    <location>
        <begin position="328"/>
        <end position="334"/>
    </location>
</feature>
<feature type="strand" evidence="9">
    <location>
        <begin position="336"/>
        <end position="348"/>
    </location>
</feature>
<feature type="strand" evidence="9">
    <location>
        <begin position="354"/>
        <end position="358"/>
    </location>
</feature>
<feature type="strand" evidence="9">
    <location>
        <begin position="362"/>
        <end position="366"/>
    </location>
</feature>
<feature type="strand" evidence="9">
    <location>
        <begin position="380"/>
        <end position="385"/>
    </location>
</feature>
<feature type="strand" evidence="9">
    <location>
        <begin position="387"/>
        <end position="390"/>
    </location>
</feature>
<feature type="strand" evidence="9">
    <location>
        <begin position="397"/>
        <end position="405"/>
    </location>
</feature>
<feature type="turn" evidence="9">
    <location>
        <begin position="406"/>
        <end position="408"/>
    </location>
</feature>
<feature type="strand" evidence="9">
    <location>
        <begin position="409"/>
        <end position="411"/>
    </location>
</feature>
<feature type="strand" evidence="9">
    <location>
        <begin position="417"/>
        <end position="420"/>
    </location>
</feature>
<feature type="helix" evidence="9">
    <location>
        <begin position="423"/>
        <end position="434"/>
    </location>
</feature>
<protein>
    <recommendedName>
        <fullName>Procollagen C-endopeptidase enhancer 1</fullName>
    </recommendedName>
    <alternativeName>
        <fullName>Procollagen COOH-terminal proteinase enhancer 1</fullName>
        <shortName>PCPE-1</shortName>
        <shortName>Procollagen C-proteinase enhancer 1</shortName>
    </alternativeName>
    <alternativeName>
        <fullName>Type 1 procollagen C-proteinase enhancer protein</fullName>
    </alternativeName>
    <alternativeName>
        <fullName>Type I procollagen COOH-terminal proteinase enhancer</fullName>
    </alternativeName>
</protein>
<comment type="function">
    <text>Binds to the C-terminal propeptide of type I procollagen and enhances procollagen C-proteinase activity.</text>
</comment>
<comment type="function">
    <text>C-terminal processed part of PCPE (CT-PCPE) may have an metalloproteinase inhibitory activity.</text>
</comment>
<comment type="subunit">
    <text evidence="2">Interacts with EFEMP2.</text>
</comment>
<comment type="interaction">
    <interactant intactId="EBI-8869614">
        <id>Q15113</id>
    </interactant>
    <interactant intactId="EBI-821758">
        <id>PRO_0000000092</id>
        <label>APP</label>
        <dbReference type="UniProtKB" id="P05067"/>
    </interactant>
    <organismsDiffer>false</organismsDiffer>
    <experiments>4</experiments>
</comment>
<comment type="interaction">
    <interactant intactId="EBI-8869614">
        <id>Q15113</id>
    </interactant>
    <interactant intactId="EBI-489827">
        <id>P13497</id>
        <label>BMP1</label>
    </interactant>
    <organismsDiffer>false</organismsDiffer>
    <experiments>3</experiments>
</comment>
<comment type="interaction">
    <interactant intactId="EBI-8869614">
        <id>Q15113</id>
    </interactant>
    <interactant intactId="EBI-2566375">
        <id>PRO_0000005794</id>
        <label>COL18A1</label>
        <dbReference type="UniProtKB" id="P39060"/>
    </interactant>
    <organismsDiffer>false</organismsDiffer>
    <experiments>4</experiments>
</comment>
<comment type="interaction">
    <interactant intactId="EBI-8869614">
        <id>Q15113</id>
    </interactant>
    <interactant intactId="EBI-2464511">
        <id>P20908</id>
        <label>COL5A1</label>
    </interactant>
    <organismsDiffer>false</organismsDiffer>
    <experiments>2</experiments>
</comment>
<comment type="interaction">
    <interactant intactId="EBI-8869614">
        <id>Q15113</id>
    </interactant>
    <interactant intactId="EBI-2530274">
        <id>P07996</id>
        <label>THBS1</label>
    </interactant>
    <organismsDiffer>false</organismsDiffer>
    <experiments>3</experiments>
</comment>
<comment type="interaction">
    <interactant intactId="EBI-8869614">
        <id>Q15113</id>
    </interactant>
    <interactant intactId="EBI-11147184">
        <id>P07589</id>
        <label>FN1</label>
    </interactant>
    <organismsDiffer>true</organismsDiffer>
    <experiments>2</experiments>
</comment>
<comment type="interaction">
    <interactant intactId="EBI-8869614">
        <id>Q15113</id>
    </interactant>
    <interactant intactId="EBI-9985816">
        <id>P18828</id>
        <label>Sdc1</label>
    </interactant>
    <organismsDiffer>true</organismsDiffer>
    <experiments>4</experiments>
</comment>
<comment type="interaction">
    <interactant intactId="EBI-8869614">
        <id>Q15113</id>
    </interactant>
    <interactant intactId="EBI-11578890">
        <id>P43407</id>
        <label>Sdc2</label>
    </interactant>
    <organismsDiffer>true</organismsDiffer>
    <experiments>4</experiments>
</comment>
<comment type="interaction">
    <interactant intactId="EBI-8869614">
        <id>Q15113</id>
    </interactant>
    <interactant intactId="EBI-9986850">
        <id>O35988</id>
        <label>Sdc4</label>
    </interactant>
    <organismsDiffer>true</organismsDiffer>
    <experiments>2</experiments>
</comment>
<comment type="subcellular location">
    <subcellularLocation>
        <location>Secreted</location>
    </subcellularLocation>
</comment>
<comment type="PTM">
    <text>C-terminally processed at multiple positions.</text>
</comment>
<reference key="1">
    <citation type="journal article" date="1994" name="J. Biol. Chem.">
        <title>Type I procollagen COOH-terminal proteinase enhancer protein: identification, primary structure, and chromosomal localization of the cognate human gene (PCOLCE).</title>
        <authorList>
            <person name="Takahara K."/>
            <person name="Kessler E."/>
            <person name="Biniaminov L."/>
            <person name="Brusel M."/>
            <person name="Eddy R.L."/>
            <person name="Jani-Sait S."/>
            <person name="Shows T.B."/>
            <person name="Greenspan D.S."/>
        </authorList>
    </citation>
    <scope>NUCLEOTIDE SEQUENCE [MRNA]</scope>
    <source>
        <tissue>Placenta</tissue>
    </source>
</reference>
<reference key="2">
    <citation type="submission" date="2000-02" db="UniProtKB">
        <authorList>
            <person name="Kessler E."/>
        </authorList>
    </citation>
    <scope>SEQUENCE REVISION TO 56; 154 AND 373</scope>
</reference>
<reference key="3">
    <citation type="journal article" date="1996" name="Cell Struct. Funct.">
        <title>Smooth muscle cell derived procollagen C-protease enhancer protein.</title>
        <authorList>
            <person name="Hirahara I."/>
            <person name="Syoufuda K."/>
            <person name="Harada K."/>
            <person name="Tomita M."/>
            <person name="Urakami K."/>
            <person name="Terai H."/>
            <person name="Morisaki N."/>
            <person name="Saito Y."/>
        </authorList>
    </citation>
    <scope>NUCLEOTIDE SEQUENCE [MRNA]</scope>
    <source>
        <tissue>Heart</tissue>
    </source>
</reference>
<reference key="4">
    <citation type="journal article" date="1998" name="Genome Res.">
        <title>Large-scale sequencing of two regions in human chromosome 7q22: analysis of 650 kb of genomic sequence around the EPO and CUTL1 loci reveals 17 genes.</title>
        <authorList>
            <person name="Gloeckner G."/>
            <person name="Scherer S."/>
            <person name="Schattevoy R."/>
            <person name="Boright A.P."/>
            <person name="Weber J."/>
            <person name="Tsui L.-C."/>
            <person name="Rosenthal A."/>
        </authorList>
    </citation>
    <scope>NUCLEOTIDE SEQUENCE [GENOMIC DNA]</scope>
</reference>
<reference key="5">
    <citation type="journal article" date="1999" name="Genomics">
        <title>Structural organization and expression patterns of the human and mouse genes for the type I procollagen COOH-terminal proteinase enhancer protein.</title>
        <authorList>
            <person name="Scott I.C."/>
            <person name="Clark T.G."/>
            <person name="Takahara K."/>
            <person name="Hoffman G.G."/>
            <person name="Greenspan D.S."/>
        </authorList>
    </citation>
    <scope>NUCLEOTIDE SEQUENCE [GENOMIC DNA]</scope>
    <source>
        <tissue>Placenta</tissue>
    </source>
</reference>
<reference key="6">
    <citation type="journal article" date="2004" name="Nat. Genet.">
        <title>Complete sequencing and characterization of 21,243 full-length human cDNAs.</title>
        <authorList>
            <person name="Ota T."/>
            <person name="Suzuki Y."/>
            <person name="Nishikawa T."/>
            <person name="Otsuki T."/>
            <person name="Sugiyama T."/>
            <person name="Irie R."/>
            <person name="Wakamatsu A."/>
            <person name="Hayashi K."/>
            <person name="Sato H."/>
            <person name="Nagai K."/>
            <person name="Kimura K."/>
            <person name="Makita H."/>
            <person name="Sekine M."/>
            <person name="Obayashi M."/>
            <person name="Nishi T."/>
            <person name="Shibahara T."/>
            <person name="Tanaka T."/>
            <person name="Ishii S."/>
            <person name="Yamamoto J."/>
            <person name="Saito K."/>
            <person name="Kawai Y."/>
            <person name="Isono Y."/>
            <person name="Nakamura Y."/>
            <person name="Nagahari K."/>
            <person name="Murakami K."/>
            <person name="Yasuda T."/>
            <person name="Iwayanagi T."/>
            <person name="Wagatsuma M."/>
            <person name="Shiratori A."/>
            <person name="Sudo H."/>
            <person name="Hosoiri T."/>
            <person name="Kaku Y."/>
            <person name="Kodaira H."/>
            <person name="Kondo H."/>
            <person name="Sugawara M."/>
            <person name="Takahashi M."/>
            <person name="Kanda K."/>
            <person name="Yokoi T."/>
            <person name="Furuya T."/>
            <person name="Kikkawa E."/>
            <person name="Omura Y."/>
            <person name="Abe K."/>
            <person name="Kamihara K."/>
            <person name="Katsuta N."/>
            <person name="Sato K."/>
            <person name="Tanikawa M."/>
            <person name="Yamazaki M."/>
            <person name="Ninomiya K."/>
            <person name="Ishibashi T."/>
            <person name="Yamashita H."/>
            <person name="Murakawa K."/>
            <person name="Fujimori K."/>
            <person name="Tanai H."/>
            <person name="Kimata M."/>
            <person name="Watanabe M."/>
            <person name="Hiraoka S."/>
            <person name="Chiba Y."/>
            <person name="Ishida S."/>
            <person name="Ono Y."/>
            <person name="Takiguchi S."/>
            <person name="Watanabe S."/>
            <person name="Yosida M."/>
            <person name="Hotuta T."/>
            <person name="Kusano J."/>
            <person name="Kanehori K."/>
            <person name="Takahashi-Fujii A."/>
            <person name="Hara H."/>
            <person name="Tanase T.-O."/>
            <person name="Nomura Y."/>
            <person name="Togiya S."/>
            <person name="Komai F."/>
            <person name="Hara R."/>
            <person name="Takeuchi K."/>
            <person name="Arita M."/>
            <person name="Imose N."/>
            <person name="Musashino K."/>
            <person name="Yuuki H."/>
            <person name="Oshima A."/>
            <person name="Sasaki N."/>
            <person name="Aotsuka S."/>
            <person name="Yoshikawa Y."/>
            <person name="Matsunawa H."/>
            <person name="Ichihara T."/>
            <person name="Shiohata N."/>
            <person name="Sano S."/>
            <person name="Moriya S."/>
            <person name="Momiyama H."/>
            <person name="Satoh N."/>
            <person name="Takami S."/>
            <person name="Terashima Y."/>
            <person name="Suzuki O."/>
            <person name="Nakagawa S."/>
            <person name="Senoh A."/>
            <person name="Mizoguchi H."/>
            <person name="Goto Y."/>
            <person name="Shimizu F."/>
            <person name="Wakebe H."/>
            <person name="Hishigaki H."/>
            <person name="Watanabe T."/>
            <person name="Sugiyama A."/>
            <person name="Takemoto M."/>
            <person name="Kawakami B."/>
            <person name="Yamazaki M."/>
            <person name="Watanabe K."/>
            <person name="Kumagai A."/>
            <person name="Itakura S."/>
            <person name="Fukuzumi Y."/>
            <person name="Fujimori Y."/>
            <person name="Komiyama M."/>
            <person name="Tashiro H."/>
            <person name="Tanigami A."/>
            <person name="Fujiwara T."/>
            <person name="Ono T."/>
            <person name="Yamada K."/>
            <person name="Fujii Y."/>
            <person name="Ozaki K."/>
            <person name="Hirao M."/>
            <person name="Ohmori Y."/>
            <person name="Kawabata A."/>
            <person name="Hikiji T."/>
            <person name="Kobatake N."/>
            <person name="Inagaki H."/>
            <person name="Ikema Y."/>
            <person name="Okamoto S."/>
            <person name="Okitani R."/>
            <person name="Kawakami T."/>
            <person name="Noguchi S."/>
            <person name="Itoh T."/>
            <person name="Shigeta K."/>
            <person name="Senba T."/>
            <person name="Matsumura K."/>
            <person name="Nakajima Y."/>
            <person name="Mizuno T."/>
            <person name="Morinaga M."/>
            <person name="Sasaki M."/>
            <person name="Togashi T."/>
            <person name="Oyama M."/>
            <person name="Hata H."/>
            <person name="Watanabe M."/>
            <person name="Komatsu T."/>
            <person name="Mizushima-Sugano J."/>
            <person name="Satoh T."/>
            <person name="Shirai Y."/>
            <person name="Takahashi Y."/>
            <person name="Nakagawa K."/>
            <person name="Okumura K."/>
            <person name="Nagase T."/>
            <person name="Nomura N."/>
            <person name="Kikuchi H."/>
            <person name="Masuho Y."/>
            <person name="Yamashita R."/>
            <person name="Nakai K."/>
            <person name="Yada T."/>
            <person name="Nakamura Y."/>
            <person name="Ohara O."/>
            <person name="Isogai T."/>
            <person name="Sugano S."/>
        </authorList>
    </citation>
    <scope>NUCLEOTIDE SEQUENCE [LARGE SCALE MRNA]</scope>
</reference>
<reference key="7">
    <citation type="submission" date="2005-09" db="EMBL/GenBank/DDBJ databases">
        <authorList>
            <person name="Mural R.J."/>
            <person name="Istrail S."/>
            <person name="Sutton G.G."/>
            <person name="Florea L."/>
            <person name="Halpern A.L."/>
            <person name="Mobarry C.M."/>
            <person name="Lippert R."/>
            <person name="Walenz B."/>
            <person name="Shatkay H."/>
            <person name="Dew I."/>
            <person name="Miller J.R."/>
            <person name="Flanigan M.J."/>
            <person name="Edwards N.J."/>
            <person name="Bolanos R."/>
            <person name="Fasulo D."/>
            <person name="Halldorsson B.V."/>
            <person name="Hannenhalli S."/>
            <person name="Turner R."/>
            <person name="Yooseph S."/>
            <person name="Lu F."/>
            <person name="Nusskern D.R."/>
            <person name="Shue B.C."/>
            <person name="Zheng X.H."/>
            <person name="Zhong F."/>
            <person name="Delcher A.L."/>
            <person name="Huson D.H."/>
            <person name="Kravitz S.A."/>
            <person name="Mouchard L."/>
            <person name="Reinert K."/>
            <person name="Remington K.A."/>
            <person name="Clark A.G."/>
            <person name="Waterman M.S."/>
            <person name="Eichler E.E."/>
            <person name="Adams M.D."/>
            <person name="Hunkapiller M.W."/>
            <person name="Myers E.W."/>
            <person name="Venter J.C."/>
        </authorList>
    </citation>
    <scope>NUCLEOTIDE SEQUENCE [LARGE SCALE GENOMIC DNA]</scope>
</reference>
<reference key="8">
    <citation type="journal article" date="2004" name="Genome Res.">
        <title>The status, quality, and expansion of the NIH full-length cDNA project: the Mammalian Gene Collection (MGC).</title>
        <authorList>
            <consortium name="The MGC Project Team"/>
        </authorList>
    </citation>
    <scope>NUCLEOTIDE SEQUENCE [LARGE SCALE MRNA]</scope>
    <source>
        <tissue>Brain</tissue>
    </source>
</reference>
<reference key="9">
    <citation type="journal article" date="2000" name="J. Biol. Chem.">
        <title>Post-translational proteolytic processing of procollagen C-terminal proteinase enhancer releases a metalloproteinase inhibitor.</title>
        <authorList>
            <person name="Mott J.D."/>
            <person name="Thomas C.L."/>
            <person name="Rosenbach M.T."/>
            <person name="Takahara K."/>
            <person name="Greenspan D.S."/>
            <person name="Banda M.J."/>
        </authorList>
    </citation>
    <scope>PARTIAL PROTEIN SEQUENCE</scope>
    <scope>CHARACTERIZATION OF INHIBITORY ACTIVITY</scope>
    <scope>CLEAVAGE SITE</scope>
</reference>
<reference key="10">
    <citation type="journal article" date="2012" name="J. Proteome Res.">
        <title>Resveratrol-induced changes of the human adipocyte secretion profile.</title>
        <authorList>
            <person name="Rosenow A."/>
            <person name="Noben J.P."/>
            <person name="Jocken J."/>
            <person name="Kallendrusch S."/>
            <person name="Fischer-Posovszky P."/>
            <person name="Mariman E.C."/>
            <person name="Renes J."/>
        </authorList>
    </citation>
    <scope>IDENTIFICATION BY MASS SPECTROMETRY [LARGE SCALE ANALYSIS]</scope>
</reference>
<reference key="11">
    <citation type="journal article" date="2003" name="J. Biol. Chem.">
        <title>NMR structure of the netrin-like domain (NTR) of human type I procollagen C-proteinase enhancer defines structural consensus of NTR domains and assesses potential proteinase inhibitory activity and ligand binding.</title>
        <authorList>
            <person name="Liepinsh E."/>
            <person name="Banyai L."/>
            <person name="Pintacuda G."/>
            <person name="Trexler M."/>
            <person name="Patthy L."/>
            <person name="Otting G."/>
        </authorList>
    </citation>
    <scope>STRUCTURE BY NMR OF 313-442</scope>
    <scope>DISULFIDE BONDS</scope>
</reference>
<evidence type="ECO:0000250" key="1">
    <source>
        <dbReference type="UniProtKB" id="O08628"/>
    </source>
</evidence>
<evidence type="ECO:0000250" key="2">
    <source>
        <dbReference type="UniProtKB" id="Q61398"/>
    </source>
</evidence>
<evidence type="ECO:0000255" key="3"/>
<evidence type="ECO:0000255" key="4">
    <source>
        <dbReference type="PROSITE-ProRule" id="PRU00059"/>
    </source>
</evidence>
<evidence type="ECO:0000255" key="5">
    <source>
        <dbReference type="PROSITE-ProRule" id="PRU00295"/>
    </source>
</evidence>
<evidence type="ECO:0000256" key="6">
    <source>
        <dbReference type="SAM" id="MobiDB-lite"/>
    </source>
</evidence>
<evidence type="ECO:0000269" key="7">
    <source>
    </source>
</evidence>
<evidence type="ECO:0000269" key="8">
    <source>
    </source>
</evidence>
<evidence type="ECO:0007829" key="9">
    <source>
        <dbReference type="PDB" id="1UAP"/>
    </source>
</evidence>
<evidence type="ECO:0007829" key="10">
    <source>
        <dbReference type="PDB" id="6FZW"/>
    </source>
</evidence>
<evidence type="ECO:0007829" key="11">
    <source>
        <dbReference type="PDB" id="9EN2"/>
    </source>
</evidence>
<gene>
    <name type="primary">PCOLCE</name>
    <name type="synonym">PCPE1</name>
</gene>
<accession>Q15113</accession>
<accession>B2R9E1</accession>
<accession>O14550</accession>
<keyword id="KW-0002">3D-structure</keyword>
<keyword id="KW-0903">Direct protein sequencing</keyword>
<keyword id="KW-1015">Disulfide bond</keyword>
<keyword id="KW-0325">Glycoprotein</keyword>
<keyword id="KW-0597">Phosphoprotein</keyword>
<keyword id="KW-1267">Proteomics identification</keyword>
<keyword id="KW-1185">Reference proteome</keyword>
<keyword id="KW-0677">Repeat</keyword>
<keyword id="KW-0964">Secreted</keyword>
<keyword id="KW-0732">Signal</keyword>
<proteinExistence type="evidence at protein level"/>
<organism>
    <name type="scientific">Homo sapiens</name>
    <name type="common">Human</name>
    <dbReference type="NCBI Taxonomy" id="9606"/>
    <lineage>
        <taxon>Eukaryota</taxon>
        <taxon>Metazoa</taxon>
        <taxon>Chordata</taxon>
        <taxon>Craniata</taxon>
        <taxon>Vertebrata</taxon>
        <taxon>Euteleostomi</taxon>
        <taxon>Mammalia</taxon>
        <taxon>Eutheria</taxon>
        <taxon>Euarchontoglires</taxon>
        <taxon>Primates</taxon>
        <taxon>Haplorrhini</taxon>
        <taxon>Catarrhini</taxon>
        <taxon>Hominidae</taxon>
        <taxon>Homo</taxon>
    </lineage>
</organism>